<dbReference type="EMBL" id="CP000255">
    <property type="protein sequence ID" value="ABD21892.1"/>
    <property type="molecule type" value="Genomic_DNA"/>
</dbReference>
<dbReference type="RefSeq" id="WP_000516261.1">
    <property type="nucleotide sequence ID" value="NZ_CP027476.1"/>
</dbReference>
<dbReference type="SMR" id="Q2FHE2"/>
<dbReference type="KEGG" id="saa:SAUSA300_1189"/>
<dbReference type="HOGENOM" id="CLU_004131_4_1_9"/>
<dbReference type="OMA" id="AHERIMY"/>
<dbReference type="Proteomes" id="UP000001939">
    <property type="component" value="Chromosome"/>
</dbReference>
<dbReference type="GO" id="GO:0032300">
    <property type="term" value="C:mismatch repair complex"/>
    <property type="evidence" value="ECO:0007669"/>
    <property type="project" value="InterPro"/>
</dbReference>
<dbReference type="GO" id="GO:0005524">
    <property type="term" value="F:ATP binding"/>
    <property type="evidence" value="ECO:0007669"/>
    <property type="project" value="InterPro"/>
</dbReference>
<dbReference type="GO" id="GO:0016887">
    <property type="term" value="F:ATP hydrolysis activity"/>
    <property type="evidence" value="ECO:0007669"/>
    <property type="project" value="InterPro"/>
</dbReference>
<dbReference type="GO" id="GO:0140664">
    <property type="term" value="F:ATP-dependent DNA damage sensor activity"/>
    <property type="evidence" value="ECO:0007669"/>
    <property type="project" value="InterPro"/>
</dbReference>
<dbReference type="GO" id="GO:0030983">
    <property type="term" value="F:mismatched DNA binding"/>
    <property type="evidence" value="ECO:0007669"/>
    <property type="project" value="InterPro"/>
</dbReference>
<dbReference type="GO" id="GO:0006298">
    <property type="term" value="P:mismatch repair"/>
    <property type="evidence" value="ECO:0007669"/>
    <property type="project" value="UniProtKB-UniRule"/>
</dbReference>
<dbReference type="CDD" id="cd16926">
    <property type="entry name" value="HATPase_MutL-MLH-PMS-like"/>
    <property type="match status" value="1"/>
</dbReference>
<dbReference type="CDD" id="cd00782">
    <property type="entry name" value="MutL_Trans"/>
    <property type="match status" value="1"/>
</dbReference>
<dbReference type="FunFam" id="3.30.1370.100:FF:000004">
    <property type="entry name" value="DNA mismatch repair endonuclease MutL"/>
    <property type="match status" value="1"/>
</dbReference>
<dbReference type="FunFam" id="3.30.230.10:FF:000036">
    <property type="entry name" value="DNA mismatch repair endonuclease MutL"/>
    <property type="match status" value="1"/>
</dbReference>
<dbReference type="FunFam" id="3.30.565.10:FF:000003">
    <property type="entry name" value="DNA mismatch repair endonuclease MutL"/>
    <property type="match status" value="1"/>
</dbReference>
<dbReference type="Gene3D" id="3.30.230.10">
    <property type="match status" value="1"/>
</dbReference>
<dbReference type="Gene3D" id="3.30.565.10">
    <property type="entry name" value="Histidine kinase-like ATPase, C-terminal domain"/>
    <property type="match status" value="1"/>
</dbReference>
<dbReference type="Gene3D" id="3.30.1540.20">
    <property type="entry name" value="MutL, C-terminal domain, dimerisation subdomain"/>
    <property type="match status" value="1"/>
</dbReference>
<dbReference type="Gene3D" id="3.30.1370.100">
    <property type="entry name" value="MutL, C-terminal domain, regulatory subdomain"/>
    <property type="match status" value="1"/>
</dbReference>
<dbReference type="HAMAP" id="MF_00149">
    <property type="entry name" value="DNA_mis_repair"/>
    <property type="match status" value="1"/>
</dbReference>
<dbReference type="InterPro" id="IPR014762">
    <property type="entry name" value="DNA_mismatch_repair_CS"/>
</dbReference>
<dbReference type="InterPro" id="IPR020667">
    <property type="entry name" value="DNA_mismatch_repair_MutL"/>
</dbReference>
<dbReference type="InterPro" id="IPR013507">
    <property type="entry name" value="DNA_mismatch_S5_2-like"/>
</dbReference>
<dbReference type="InterPro" id="IPR036890">
    <property type="entry name" value="HATPase_C_sf"/>
</dbReference>
<dbReference type="InterPro" id="IPR002099">
    <property type="entry name" value="MutL/Mlh/PMS"/>
</dbReference>
<dbReference type="InterPro" id="IPR038973">
    <property type="entry name" value="MutL/Mlh/Pms-like"/>
</dbReference>
<dbReference type="InterPro" id="IPR014790">
    <property type="entry name" value="MutL_C"/>
</dbReference>
<dbReference type="InterPro" id="IPR042120">
    <property type="entry name" value="MutL_C_dimsub"/>
</dbReference>
<dbReference type="InterPro" id="IPR042121">
    <property type="entry name" value="MutL_C_regsub"/>
</dbReference>
<dbReference type="InterPro" id="IPR037198">
    <property type="entry name" value="MutL_C_sf"/>
</dbReference>
<dbReference type="InterPro" id="IPR020568">
    <property type="entry name" value="Ribosomal_Su5_D2-typ_SF"/>
</dbReference>
<dbReference type="InterPro" id="IPR014721">
    <property type="entry name" value="Ribsml_uS5_D2-typ_fold_subgr"/>
</dbReference>
<dbReference type="NCBIfam" id="TIGR00585">
    <property type="entry name" value="mutl"/>
    <property type="match status" value="1"/>
</dbReference>
<dbReference type="NCBIfam" id="NF000950">
    <property type="entry name" value="PRK00095.1-3"/>
    <property type="match status" value="1"/>
</dbReference>
<dbReference type="PANTHER" id="PTHR10073">
    <property type="entry name" value="DNA MISMATCH REPAIR PROTEIN MLH, PMS, MUTL"/>
    <property type="match status" value="1"/>
</dbReference>
<dbReference type="PANTHER" id="PTHR10073:SF12">
    <property type="entry name" value="DNA MISMATCH REPAIR PROTEIN MLH1"/>
    <property type="match status" value="1"/>
</dbReference>
<dbReference type="Pfam" id="PF01119">
    <property type="entry name" value="DNA_mis_repair"/>
    <property type="match status" value="1"/>
</dbReference>
<dbReference type="Pfam" id="PF13589">
    <property type="entry name" value="HATPase_c_3"/>
    <property type="match status" value="1"/>
</dbReference>
<dbReference type="Pfam" id="PF08676">
    <property type="entry name" value="MutL_C"/>
    <property type="match status" value="1"/>
</dbReference>
<dbReference type="SMART" id="SM01340">
    <property type="entry name" value="DNA_mis_repair"/>
    <property type="match status" value="1"/>
</dbReference>
<dbReference type="SMART" id="SM00853">
    <property type="entry name" value="MutL_C"/>
    <property type="match status" value="1"/>
</dbReference>
<dbReference type="SUPFAM" id="SSF55874">
    <property type="entry name" value="ATPase domain of HSP90 chaperone/DNA topoisomerase II/histidine kinase"/>
    <property type="match status" value="1"/>
</dbReference>
<dbReference type="SUPFAM" id="SSF118116">
    <property type="entry name" value="DNA mismatch repair protein MutL"/>
    <property type="match status" value="1"/>
</dbReference>
<dbReference type="SUPFAM" id="SSF54211">
    <property type="entry name" value="Ribosomal protein S5 domain 2-like"/>
    <property type="match status" value="1"/>
</dbReference>
<dbReference type="PROSITE" id="PS00058">
    <property type="entry name" value="DNA_MISMATCH_REPAIR_1"/>
    <property type="match status" value="1"/>
</dbReference>
<keyword id="KW-0227">DNA damage</keyword>
<keyword id="KW-0234">DNA repair</keyword>
<reference key="1">
    <citation type="journal article" date="2006" name="Lancet">
        <title>Complete genome sequence of USA300, an epidemic clone of community-acquired meticillin-resistant Staphylococcus aureus.</title>
        <authorList>
            <person name="Diep B.A."/>
            <person name="Gill S.R."/>
            <person name="Chang R.F."/>
            <person name="Phan T.H."/>
            <person name="Chen J.H."/>
            <person name="Davidson M.G."/>
            <person name="Lin F."/>
            <person name="Lin J."/>
            <person name="Carleton H.A."/>
            <person name="Mongodin E.F."/>
            <person name="Sensabaugh G.F."/>
            <person name="Perdreau-Remington F."/>
        </authorList>
    </citation>
    <scope>NUCLEOTIDE SEQUENCE [LARGE SCALE GENOMIC DNA]</scope>
    <source>
        <strain>USA300</strain>
    </source>
</reference>
<protein>
    <recommendedName>
        <fullName evidence="1">DNA mismatch repair protein MutL</fullName>
    </recommendedName>
</protein>
<comment type="function">
    <text evidence="1">This protein is involved in the repair of mismatches in DNA. It is required for dam-dependent methyl-directed DNA mismatch repair. May act as a 'molecular matchmaker', a protein that promotes the formation of a stable complex between two or more DNA-binding proteins in an ATP-dependent manner without itself being part of a final effector complex.</text>
</comment>
<comment type="similarity">
    <text evidence="1">Belongs to the DNA mismatch repair MutL/HexB family.</text>
</comment>
<sequence length="669" mass="76855">MGKIKELQTSLANKIAAGEVVERPSSVVKELLENAIDAGATEISIEVEESGVQSIRVVDNGSGIEAEDLGLVFHRHATSKLDQDEDLFHIRTLGFRGEALASISSVAKVTLKTCTDNANGNEIYVENGEILNHKPAKAKKGTDILVESLFYNTPARLKYIKSLYTELGKITDIVNRMAMSHPDIRIALISDGKTMLSTNGSGRTNEVMAEIYGMKVARDLVHISGDTSDYHIEGFVAKPEHSRSNKHYISIFINGRYIKNFMLNKAILEGYHTLLTIGRFPICYINIEMDPILVDVNVHPTKLEVRLSKEEQLYQLIVSKIQEAFKDRILIPKNNLDYVPKKNKVLHSFEQQKIEFEQRQNTENNQEKTFSSEESNSKPFMEENQNDEIVIKEDSYNPFVTKTSESLIADDESSGYNNTREKDEDYFKKQQEILQEMDQTFDSNDGTTVQNYENKASDDYYDVNDIKGTKSKDPKRRIPYMEIVGQVHGTYIIAQNEFGMYMIDQHAAQERIKYEYFRDKIGEVTNEVQDLLIPLTFHFSKDEQLVIDQYKNELQQVGIMLEHFGGHDYIVSSYPVWFPKDEVEEIIKDMIELILEEKKVDIKKLREDVAIMMSCKKSIKANHYLQKHEMSDLIDQLREAEDPFTCPHGRPIIINFSKYELEKLFKRVM</sequence>
<accession>Q2FHE2</accession>
<name>MUTL_STAA3</name>
<gene>
    <name evidence="1" type="primary">mutL</name>
    <name type="ordered locus">SAUSA300_1189</name>
</gene>
<organism>
    <name type="scientific">Staphylococcus aureus (strain USA300)</name>
    <dbReference type="NCBI Taxonomy" id="367830"/>
    <lineage>
        <taxon>Bacteria</taxon>
        <taxon>Bacillati</taxon>
        <taxon>Bacillota</taxon>
        <taxon>Bacilli</taxon>
        <taxon>Bacillales</taxon>
        <taxon>Staphylococcaceae</taxon>
        <taxon>Staphylococcus</taxon>
    </lineage>
</organism>
<proteinExistence type="inferred from homology"/>
<evidence type="ECO:0000255" key="1">
    <source>
        <dbReference type="HAMAP-Rule" id="MF_00149"/>
    </source>
</evidence>
<evidence type="ECO:0000256" key="2">
    <source>
        <dbReference type="SAM" id="MobiDB-lite"/>
    </source>
</evidence>
<feature type="chain" id="PRO_1000010085" description="DNA mismatch repair protein MutL">
    <location>
        <begin position="1"/>
        <end position="669"/>
    </location>
</feature>
<feature type="region of interest" description="Disordered" evidence="2">
    <location>
        <begin position="356"/>
        <end position="382"/>
    </location>
</feature>
<feature type="compositionally biased region" description="Polar residues" evidence="2">
    <location>
        <begin position="361"/>
        <end position="378"/>
    </location>
</feature>